<sequence length="288" mass="30229">MAFEQRIEAAMAAAIARGQGSEAPSKLATALDYAVTPGGARIRPTLLLSVATACGDDRPALSDAAAVALELIHCASLVHDDLPCFDDAEIRRGKPTVHRAYSEPLAILTGDSLIVMGFEVLARAAADQPQRALQLVTALAVRTGMPMGICAGQGWESESQINLSAYHRAKTGALFIAATQMGAIAAGYEAEPWEELGARIGEAFQVADDLRDALCDAETLGKPAGQDEIHARPNAVREYGVEGAAKRLKDILGGAIASIPSCPGEAMLAEMVRRYAEKIVPAQVAARV</sequence>
<name>CRTE_CERS4</name>
<protein>
    <recommendedName>
        <fullName>Geranylgeranyl diphosphate synthase</fullName>
        <shortName>GGPP synthase</shortName>
        <ecNumber>2.5.1.29</ecNumber>
    </recommendedName>
    <alternativeName>
        <fullName>Farnesyltranstransferase</fullName>
    </alternativeName>
</protein>
<organism>
    <name type="scientific">Cereibacter sphaeroides (strain ATCC 17023 / DSM 158 / JCM 6121 / CCUG 31486 / LMG 2827 / NBRC 12203 / NCIMB 8253 / ATH 2.4.1.)</name>
    <name type="common">Rhodobacter sphaeroides</name>
    <dbReference type="NCBI Taxonomy" id="272943"/>
    <lineage>
        <taxon>Bacteria</taxon>
        <taxon>Pseudomonadati</taxon>
        <taxon>Pseudomonadota</taxon>
        <taxon>Alphaproteobacteria</taxon>
        <taxon>Rhodobacterales</taxon>
        <taxon>Paracoccaceae</taxon>
        <taxon>Cereibacter</taxon>
    </lineage>
</organism>
<evidence type="ECO:0000250" key="1"/>
<evidence type="ECO:0000250" key="2">
    <source>
        <dbReference type="UniProtKB" id="P14324"/>
    </source>
</evidence>
<evidence type="ECO:0000250" key="3">
    <source>
        <dbReference type="UniProtKB" id="Q12051"/>
    </source>
</evidence>
<evidence type="ECO:0000305" key="4"/>
<reference key="1">
    <citation type="journal article" date="1995" name="J. Bacteriol.">
        <title>Complete DNA sequence, specific Tn5 insertion map, and gene assignment of the carotenoid biosynthesis pathway of Rhodobacter sphaeroides.</title>
        <authorList>
            <person name="Lang H.P."/>
            <person name="Cogdell R.J."/>
            <person name="Takaichi S."/>
            <person name="Hunter C.N."/>
        </authorList>
    </citation>
    <scope>NUCLEOTIDE SEQUENCE [GENOMIC DNA]</scope>
</reference>
<reference key="2">
    <citation type="journal article" date="2000" name="Nucleic Acids Res.">
        <title>DNA sequence analysis of the photosynthesis region of Rhodobacter sphaeroides 2.4.1.</title>
        <authorList>
            <person name="Choudhary M."/>
            <person name="Kaplan S."/>
        </authorList>
    </citation>
    <scope>NUCLEOTIDE SEQUENCE [GENOMIC DNA]</scope>
</reference>
<reference key="3">
    <citation type="submission" date="2005-09" db="EMBL/GenBank/DDBJ databases">
        <title>Complete sequence of chromosome 1 of Rhodobacter sphaeroides 2.4.1.</title>
        <authorList>
            <person name="Copeland A."/>
            <person name="Lucas S."/>
            <person name="Lapidus A."/>
            <person name="Barry K."/>
            <person name="Detter J.C."/>
            <person name="Glavina T."/>
            <person name="Hammon N."/>
            <person name="Israni S."/>
            <person name="Pitluck S."/>
            <person name="Richardson P."/>
            <person name="Mackenzie C."/>
            <person name="Choudhary M."/>
            <person name="Larimer F."/>
            <person name="Hauser L.J."/>
            <person name="Land M."/>
            <person name="Donohue T.J."/>
            <person name="Kaplan S."/>
        </authorList>
    </citation>
    <scope>NUCLEOTIDE SEQUENCE [LARGE SCALE GENOMIC DNA]</scope>
    <source>
        <strain>ATCC 17023 / DSM 158 / JCM 6121 / CCUG 31486 / LMG 2827 / NBRC 12203 / NCIMB 8253 / ATH 2.4.1.</strain>
    </source>
</reference>
<feature type="chain" id="PRO_0000123995" description="Geranylgeranyl diphosphate synthase">
    <location>
        <begin position="1"/>
        <end position="288"/>
    </location>
</feature>
<feature type="binding site" evidence="2">
    <location>
        <position position="43"/>
    </location>
    <ligand>
        <name>isopentenyl diphosphate</name>
        <dbReference type="ChEBI" id="CHEBI:128769"/>
    </ligand>
</feature>
<feature type="binding site" evidence="3">
    <location>
        <position position="73"/>
    </location>
    <ligand>
        <name>isopentenyl diphosphate</name>
        <dbReference type="ChEBI" id="CHEBI:128769"/>
    </ligand>
</feature>
<feature type="binding site" evidence="2">
    <location>
        <position position="80"/>
    </location>
    <ligand>
        <name>Mg(2+)</name>
        <dbReference type="ChEBI" id="CHEBI:18420"/>
        <label>1</label>
    </ligand>
</feature>
<feature type="binding site" evidence="2">
    <location>
        <position position="80"/>
    </location>
    <ligand>
        <name>Mg(2+)</name>
        <dbReference type="ChEBI" id="CHEBI:18420"/>
        <label>2</label>
    </ligand>
</feature>
<feature type="binding site" evidence="2">
    <location>
        <position position="86"/>
    </location>
    <ligand>
        <name>Mg(2+)</name>
        <dbReference type="ChEBI" id="CHEBI:18420"/>
        <label>1</label>
    </ligand>
</feature>
<feature type="binding site" evidence="2">
    <location>
        <position position="86"/>
    </location>
    <ligand>
        <name>Mg(2+)</name>
        <dbReference type="ChEBI" id="CHEBI:18420"/>
        <label>2</label>
    </ligand>
</feature>
<feature type="binding site" evidence="1">
    <location>
        <position position="91"/>
    </location>
    <ligand>
        <name>(2E,6E)-farnesyl diphosphate</name>
        <dbReference type="ChEBI" id="CHEBI:175763"/>
    </ligand>
</feature>
<feature type="binding site" evidence="2">
    <location>
        <position position="92"/>
    </location>
    <ligand>
        <name>isopentenyl diphosphate</name>
        <dbReference type="ChEBI" id="CHEBI:128769"/>
    </ligand>
</feature>
<feature type="binding site" evidence="1">
    <location>
        <position position="170"/>
    </location>
    <ligand>
        <name>(2E,6E)-farnesyl diphosphate</name>
        <dbReference type="ChEBI" id="CHEBI:175763"/>
    </ligand>
</feature>
<feature type="binding site" evidence="1">
    <location>
        <position position="171"/>
    </location>
    <ligand>
        <name>(2E,6E)-farnesyl diphosphate</name>
        <dbReference type="ChEBI" id="CHEBI:175763"/>
    </ligand>
</feature>
<feature type="binding site" evidence="1">
    <location>
        <position position="205"/>
    </location>
    <ligand>
        <name>(2E,6E)-farnesyl diphosphate</name>
        <dbReference type="ChEBI" id="CHEBI:175763"/>
    </ligand>
</feature>
<feature type="sequence conflict" description="In Ref. 1; CAB38744." evidence="4" ref="1">
    <original>A</original>
    <variation>R</variation>
    <location>
        <position position="53"/>
    </location>
</feature>
<feature type="sequence conflict" description="In Ref. 1; CAB38744." evidence="4" ref="1">
    <original>D</original>
    <variation>S</variation>
    <location>
        <position position="57"/>
    </location>
</feature>
<feature type="sequence conflict" description="In Ref. 2; AAF24294." evidence="4" ref="2">
    <original>A</original>
    <variation>V</variation>
    <location>
        <position position="60"/>
    </location>
</feature>
<feature type="sequence conflict" description="In Ref. 1; CAB38744." evidence="4" ref="1">
    <original>R</original>
    <variation>G</variation>
    <location>
        <position position="123"/>
    </location>
</feature>
<feature type="sequence conflict" description="In Ref. 1; CAB38744." evidence="4" ref="1">
    <original>Q</original>
    <variation>R</variation>
    <location>
        <position position="128"/>
    </location>
</feature>
<feature type="sequence conflict" description="In Ref. 1; CAB38744." evidence="4" ref="1">
    <original>N</original>
    <variation>S</variation>
    <location>
        <position position="234"/>
    </location>
</feature>
<feature type="sequence conflict" description="In Ref. 1; CAB38744." evidence="4" ref="1">
    <original>R</original>
    <variation>G</variation>
    <location>
        <position position="247"/>
    </location>
</feature>
<feature type="sequence conflict" description="In Ref. 1; CAB38744." evidence="4" ref="1">
    <original>G</original>
    <variation>A</variation>
    <location>
        <position position="264"/>
    </location>
</feature>
<feature type="sequence conflict" description="In Ref. 1; CAB38744." evidence="4" ref="1">
    <original>E</original>
    <variation>D</variation>
    <location>
        <position position="277"/>
    </location>
</feature>
<gene>
    <name type="primary">crtE</name>
    <name type="ordered locus">RHOS4_18710</name>
    <name type="ORF">RSP_0265</name>
</gene>
<accession>P54976</accession>
<accession>Q3J195</accession>
<accession>Q9RFC5</accession>
<keyword id="KW-0125">Carotenoid biosynthesis</keyword>
<keyword id="KW-0149">Chlorophyll biosynthesis</keyword>
<keyword id="KW-0414">Isoprene biosynthesis</keyword>
<keyword id="KW-0460">Magnesium</keyword>
<keyword id="KW-0479">Metal-binding</keyword>
<keyword id="KW-0602">Photosynthesis</keyword>
<keyword id="KW-1185">Reference proteome</keyword>
<keyword id="KW-0808">Transferase</keyword>
<comment type="function">
    <text evidence="1">Catalyzes the condensation of farnesyl diphosphate (FPP) and isopentenyl diphosphate (IPP) to yield geranylgeranyl diphosphate (GGPP) needed for biosynthesis of carotenoids and diterpenes.</text>
</comment>
<comment type="catalytic activity">
    <reaction>
        <text>isopentenyl diphosphate + (2E,6E)-farnesyl diphosphate = (2E,6E,10E)-geranylgeranyl diphosphate + diphosphate</text>
        <dbReference type="Rhea" id="RHEA:17653"/>
        <dbReference type="ChEBI" id="CHEBI:33019"/>
        <dbReference type="ChEBI" id="CHEBI:58756"/>
        <dbReference type="ChEBI" id="CHEBI:128769"/>
        <dbReference type="ChEBI" id="CHEBI:175763"/>
        <dbReference type="EC" id="2.5.1.29"/>
    </reaction>
</comment>
<comment type="cofactor">
    <cofactor evidence="1">
        <name>Mg(2+)</name>
        <dbReference type="ChEBI" id="CHEBI:18420"/>
    </cofactor>
    <text evidence="1">Binds 2 Mg(2+) ions per subunit.</text>
</comment>
<comment type="pathway">
    <text>Isoprenoid biosynthesis; geranylgeranyl diphosphate biosynthesis; geranylgeranyl diphosphate from farnesyl diphosphate and isopentenyl diphosphate: step 1/1.</text>
</comment>
<comment type="similarity">
    <text evidence="4">Belongs to the FPP/GGPP synthase family.</text>
</comment>
<comment type="sequence caution" evidence="4">
    <conflict type="erroneous initiation">
        <sequence resource="EMBL-CDS" id="ABA79439"/>
    </conflict>
    <text>Extended N-terminus.</text>
</comment>
<dbReference type="EC" id="2.5.1.29"/>
<dbReference type="EMBL" id="AJ010302">
    <property type="protein sequence ID" value="CAB38744.1"/>
    <property type="molecule type" value="Genomic_DNA"/>
</dbReference>
<dbReference type="EMBL" id="AF195122">
    <property type="protein sequence ID" value="AAF24294.1"/>
    <property type="molecule type" value="Genomic_DNA"/>
</dbReference>
<dbReference type="EMBL" id="CP000143">
    <property type="protein sequence ID" value="ABA79439.2"/>
    <property type="status" value="ALT_INIT"/>
    <property type="molecule type" value="Genomic_DNA"/>
</dbReference>
<dbReference type="PIR" id="S49625">
    <property type="entry name" value="S49625"/>
</dbReference>
<dbReference type="PIR" id="T50750">
    <property type="entry name" value="T50750"/>
</dbReference>
<dbReference type="RefSeq" id="WP_011338112.1">
    <property type="nucleotide sequence ID" value="NZ_CP030271.1"/>
</dbReference>
<dbReference type="RefSeq" id="YP_353340.2">
    <property type="nucleotide sequence ID" value="NC_007493.2"/>
</dbReference>
<dbReference type="SMR" id="P54976"/>
<dbReference type="STRING" id="272943.RSP_0265"/>
<dbReference type="EnsemblBacteria" id="ABA79439">
    <property type="protein sequence ID" value="ABA79439"/>
    <property type="gene ID" value="RSP_0265"/>
</dbReference>
<dbReference type="GeneID" id="3719275"/>
<dbReference type="KEGG" id="rsp:RSP_0265"/>
<dbReference type="PATRIC" id="fig|272943.9.peg.2209"/>
<dbReference type="eggNOG" id="COG0142">
    <property type="taxonomic scope" value="Bacteria"/>
</dbReference>
<dbReference type="OrthoDB" id="9805316at2"/>
<dbReference type="PhylomeDB" id="P54976"/>
<dbReference type="UniPathway" id="UPA00389">
    <property type="reaction ID" value="UER00564"/>
</dbReference>
<dbReference type="Proteomes" id="UP000002703">
    <property type="component" value="Chromosome 1"/>
</dbReference>
<dbReference type="GO" id="GO:0004311">
    <property type="term" value="F:geranylgeranyl diphosphate synthase activity"/>
    <property type="evidence" value="ECO:0000250"/>
    <property type="project" value="UniProtKB"/>
</dbReference>
<dbReference type="GO" id="GO:0046872">
    <property type="term" value="F:metal ion binding"/>
    <property type="evidence" value="ECO:0007669"/>
    <property type="project" value="UniProtKB-KW"/>
</dbReference>
<dbReference type="GO" id="GO:0016117">
    <property type="term" value="P:carotenoid biosynthetic process"/>
    <property type="evidence" value="ECO:0007669"/>
    <property type="project" value="UniProtKB-KW"/>
</dbReference>
<dbReference type="GO" id="GO:0015995">
    <property type="term" value="P:chlorophyll biosynthetic process"/>
    <property type="evidence" value="ECO:0007669"/>
    <property type="project" value="UniProtKB-KW"/>
</dbReference>
<dbReference type="GO" id="GO:0033386">
    <property type="term" value="P:geranylgeranyl diphosphate biosynthetic process"/>
    <property type="evidence" value="ECO:0000250"/>
    <property type="project" value="UniProtKB"/>
</dbReference>
<dbReference type="GO" id="GO:0015979">
    <property type="term" value="P:photosynthesis"/>
    <property type="evidence" value="ECO:0007669"/>
    <property type="project" value="UniProtKB-KW"/>
</dbReference>
<dbReference type="CDD" id="cd00685">
    <property type="entry name" value="Trans_IPPS_HT"/>
    <property type="match status" value="1"/>
</dbReference>
<dbReference type="FunFam" id="1.10.600.10:FF:000001">
    <property type="entry name" value="Geranylgeranyl diphosphate synthase"/>
    <property type="match status" value="1"/>
</dbReference>
<dbReference type="Gene3D" id="1.10.600.10">
    <property type="entry name" value="Farnesyl Diphosphate Synthase"/>
    <property type="match status" value="1"/>
</dbReference>
<dbReference type="InterPro" id="IPR008949">
    <property type="entry name" value="Isoprenoid_synthase_dom_sf"/>
</dbReference>
<dbReference type="InterPro" id="IPR000092">
    <property type="entry name" value="Polyprenyl_synt"/>
</dbReference>
<dbReference type="InterPro" id="IPR033749">
    <property type="entry name" value="Polyprenyl_synt_CS"/>
</dbReference>
<dbReference type="PANTHER" id="PTHR43281">
    <property type="entry name" value="FARNESYL DIPHOSPHATE SYNTHASE"/>
    <property type="match status" value="1"/>
</dbReference>
<dbReference type="PANTHER" id="PTHR43281:SF1">
    <property type="entry name" value="FARNESYL DIPHOSPHATE SYNTHASE"/>
    <property type="match status" value="1"/>
</dbReference>
<dbReference type="Pfam" id="PF00348">
    <property type="entry name" value="polyprenyl_synt"/>
    <property type="match status" value="1"/>
</dbReference>
<dbReference type="SFLD" id="SFLDS00005">
    <property type="entry name" value="Isoprenoid_Synthase_Type_I"/>
    <property type="match status" value="1"/>
</dbReference>
<dbReference type="SUPFAM" id="SSF48576">
    <property type="entry name" value="Terpenoid synthases"/>
    <property type="match status" value="1"/>
</dbReference>
<dbReference type="PROSITE" id="PS00723">
    <property type="entry name" value="POLYPRENYL_SYNTHASE_1"/>
    <property type="match status" value="1"/>
</dbReference>
<dbReference type="PROSITE" id="PS00444">
    <property type="entry name" value="POLYPRENYL_SYNTHASE_2"/>
    <property type="match status" value="1"/>
</dbReference>
<proteinExistence type="inferred from homology"/>